<name>ALLB_ECOHS</name>
<accession>A7ZXG5</accession>
<organism>
    <name type="scientific">Escherichia coli O9:H4 (strain HS)</name>
    <dbReference type="NCBI Taxonomy" id="331112"/>
    <lineage>
        <taxon>Bacteria</taxon>
        <taxon>Pseudomonadati</taxon>
        <taxon>Pseudomonadota</taxon>
        <taxon>Gammaproteobacteria</taxon>
        <taxon>Enterobacterales</taxon>
        <taxon>Enterobacteriaceae</taxon>
        <taxon>Escherichia</taxon>
    </lineage>
</organism>
<protein>
    <recommendedName>
        <fullName evidence="1">Allantoinase</fullName>
        <ecNumber evidence="1">3.5.2.5</ecNumber>
    </recommendedName>
    <alternativeName>
        <fullName evidence="1">Allantoin-utilizing enzyme</fullName>
    </alternativeName>
</protein>
<gene>
    <name evidence="1" type="primary">allB</name>
    <name type="ordered locus">EcHS_A0585</name>
</gene>
<keyword id="KW-0378">Hydrolase</keyword>
<keyword id="KW-0479">Metal-binding</keyword>
<keyword id="KW-0659">Purine metabolism</keyword>
<keyword id="KW-0862">Zinc</keyword>
<feature type="chain" id="PRO_0000317680" description="Allantoinase">
    <location>
        <begin position="1"/>
        <end position="453"/>
    </location>
</feature>
<feature type="binding site" evidence="1">
    <location>
        <position position="59"/>
    </location>
    <ligand>
        <name>Zn(2+)</name>
        <dbReference type="ChEBI" id="CHEBI:29105"/>
        <label>1</label>
    </ligand>
</feature>
<feature type="binding site" evidence="1">
    <location>
        <position position="61"/>
    </location>
    <ligand>
        <name>Zn(2+)</name>
        <dbReference type="ChEBI" id="CHEBI:29105"/>
        <label>1</label>
    </ligand>
</feature>
<feature type="binding site" description="via carbamate group" evidence="1">
    <location>
        <position position="146"/>
    </location>
    <ligand>
        <name>Zn(2+)</name>
        <dbReference type="ChEBI" id="CHEBI:29105"/>
        <label>1</label>
    </ligand>
</feature>
<feature type="binding site" description="via carbamate group" evidence="1">
    <location>
        <position position="146"/>
    </location>
    <ligand>
        <name>Zn(2+)</name>
        <dbReference type="ChEBI" id="CHEBI:29105"/>
        <label>2</label>
    </ligand>
</feature>
<feature type="binding site" evidence="1">
    <location>
        <position position="186"/>
    </location>
    <ligand>
        <name>Zn(2+)</name>
        <dbReference type="ChEBI" id="CHEBI:29105"/>
        <label>2</label>
    </ligand>
</feature>
<feature type="binding site" evidence="1">
    <location>
        <position position="242"/>
    </location>
    <ligand>
        <name>Zn(2+)</name>
        <dbReference type="ChEBI" id="CHEBI:29105"/>
        <label>2</label>
    </ligand>
</feature>
<feature type="binding site" evidence="1">
    <location>
        <position position="315"/>
    </location>
    <ligand>
        <name>Zn(2+)</name>
        <dbReference type="ChEBI" id="CHEBI:29105"/>
        <label>1</label>
    </ligand>
</feature>
<feature type="modified residue" description="N6-carboxylysine" evidence="1">
    <location>
        <position position="146"/>
    </location>
</feature>
<sequence length="453" mass="49545">MSFDLIIKNGTVILENEARVVDIAVKGGKIAAIGQDLGDAKEVMDASGLVVSPGMVDAHTHISEPGRSHWEGYETGTRAAAKGGITTMIEMPLNQLPATVDRASIELKFDAAKGKLTIDAAQLGGLVSYNIDRLHELDEVGVVGFKCFVATCGDRGIDNDFRDVNDWQFFKGAQKLGELGQPVLVHCENALICDALGEEAKSEGRVTAHDYVASRPVFTEVEAIRRVLYLAKVAGCRLHICHISSPEGVEEVTRARQEGQDVTCESCPHYFVLDTDQFEEIGTLAKCSPPIRDLENQKGMWEKLFNGEIDCLVSDHSPCPPEMKAGNIMEAWGGIAGLQNCMDVMFDEAVQKRGMSLPMFGKLMATNAADIFGLQQKGRIAPGKDAEFVFIQPNSSYVLTNDDLEYRHKVSPYVGRTIGARITKTILRGDVIYDIEQGFPVAPKGQFILKHQQ</sequence>
<dbReference type="EC" id="3.5.2.5" evidence="1"/>
<dbReference type="EMBL" id="CP000802">
    <property type="protein sequence ID" value="ABV04969.1"/>
    <property type="molecule type" value="Genomic_DNA"/>
</dbReference>
<dbReference type="RefSeq" id="WP_000006891.1">
    <property type="nucleotide sequence ID" value="NC_009800.1"/>
</dbReference>
<dbReference type="SMR" id="A7ZXG5"/>
<dbReference type="KEGG" id="ecx:EcHS_A0585"/>
<dbReference type="HOGENOM" id="CLU_015572_4_2_6"/>
<dbReference type="UniPathway" id="UPA00395">
    <property type="reaction ID" value="UER00653"/>
</dbReference>
<dbReference type="GO" id="GO:0005737">
    <property type="term" value="C:cytoplasm"/>
    <property type="evidence" value="ECO:0007669"/>
    <property type="project" value="TreeGrafter"/>
</dbReference>
<dbReference type="GO" id="GO:0004038">
    <property type="term" value="F:allantoinase activity"/>
    <property type="evidence" value="ECO:0007669"/>
    <property type="project" value="UniProtKB-UniRule"/>
</dbReference>
<dbReference type="GO" id="GO:0050897">
    <property type="term" value="F:cobalt ion binding"/>
    <property type="evidence" value="ECO:0007669"/>
    <property type="project" value="InterPro"/>
</dbReference>
<dbReference type="GO" id="GO:0008270">
    <property type="term" value="F:zinc ion binding"/>
    <property type="evidence" value="ECO:0007669"/>
    <property type="project" value="InterPro"/>
</dbReference>
<dbReference type="GO" id="GO:0000256">
    <property type="term" value="P:allantoin catabolic process"/>
    <property type="evidence" value="ECO:0007669"/>
    <property type="project" value="UniProtKB-UniRule"/>
</dbReference>
<dbReference type="GO" id="GO:0006145">
    <property type="term" value="P:purine nucleobase catabolic process"/>
    <property type="evidence" value="ECO:0007669"/>
    <property type="project" value="TreeGrafter"/>
</dbReference>
<dbReference type="CDD" id="cd01315">
    <property type="entry name" value="L-HYD_ALN"/>
    <property type="match status" value="1"/>
</dbReference>
<dbReference type="FunFam" id="3.20.20.140:FF:000013">
    <property type="entry name" value="Allantoinase"/>
    <property type="match status" value="1"/>
</dbReference>
<dbReference type="Gene3D" id="3.20.20.140">
    <property type="entry name" value="Metal-dependent hydrolases"/>
    <property type="match status" value="1"/>
</dbReference>
<dbReference type="Gene3D" id="2.30.40.10">
    <property type="entry name" value="Urease, subunit C, domain 1"/>
    <property type="match status" value="1"/>
</dbReference>
<dbReference type="HAMAP" id="MF_01645">
    <property type="entry name" value="Hydantoinase"/>
    <property type="match status" value="1"/>
</dbReference>
<dbReference type="InterPro" id="IPR017593">
    <property type="entry name" value="Allantoinase"/>
</dbReference>
<dbReference type="InterPro" id="IPR047604">
    <property type="entry name" value="Allantoinase_bact"/>
</dbReference>
<dbReference type="InterPro" id="IPR006680">
    <property type="entry name" value="Amidohydro-rel"/>
</dbReference>
<dbReference type="InterPro" id="IPR050138">
    <property type="entry name" value="DHOase/Allantoinase_Hydrolase"/>
</dbReference>
<dbReference type="InterPro" id="IPR011059">
    <property type="entry name" value="Metal-dep_hydrolase_composite"/>
</dbReference>
<dbReference type="InterPro" id="IPR032466">
    <property type="entry name" value="Metal_Hydrolase"/>
</dbReference>
<dbReference type="NCBIfam" id="TIGR03178">
    <property type="entry name" value="allantoinase"/>
    <property type="match status" value="1"/>
</dbReference>
<dbReference type="NCBIfam" id="NF005960">
    <property type="entry name" value="PRK08044.1"/>
    <property type="match status" value="1"/>
</dbReference>
<dbReference type="PANTHER" id="PTHR43668">
    <property type="entry name" value="ALLANTOINASE"/>
    <property type="match status" value="1"/>
</dbReference>
<dbReference type="PANTHER" id="PTHR43668:SF4">
    <property type="entry name" value="ALLANTOINASE"/>
    <property type="match status" value="1"/>
</dbReference>
<dbReference type="Pfam" id="PF01979">
    <property type="entry name" value="Amidohydro_1"/>
    <property type="match status" value="1"/>
</dbReference>
<dbReference type="SUPFAM" id="SSF51338">
    <property type="entry name" value="Composite domain of metallo-dependent hydrolases"/>
    <property type="match status" value="1"/>
</dbReference>
<dbReference type="SUPFAM" id="SSF51556">
    <property type="entry name" value="Metallo-dependent hydrolases"/>
    <property type="match status" value="1"/>
</dbReference>
<evidence type="ECO:0000255" key="1">
    <source>
        <dbReference type="HAMAP-Rule" id="MF_01645"/>
    </source>
</evidence>
<comment type="function">
    <text evidence="1">Catalyzes the conversion of allantoin (5-ureidohydantoin) to allantoic acid by hydrolytic cleavage of the five-member hydantoin ring.</text>
</comment>
<comment type="catalytic activity">
    <reaction evidence="1">
        <text>(S)-allantoin + H2O = allantoate + H(+)</text>
        <dbReference type="Rhea" id="RHEA:17029"/>
        <dbReference type="ChEBI" id="CHEBI:15377"/>
        <dbReference type="ChEBI" id="CHEBI:15378"/>
        <dbReference type="ChEBI" id="CHEBI:15678"/>
        <dbReference type="ChEBI" id="CHEBI:17536"/>
        <dbReference type="EC" id="3.5.2.5"/>
    </reaction>
</comment>
<comment type="cofactor">
    <cofactor evidence="1">
        <name>Zn(2+)</name>
        <dbReference type="ChEBI" id="CHEBI:29105"/>
    </cofactor>
    <text evidence="1">Binds 2 Zn(2+) ions per subunit.</text>
</comment>
<comment type="pathway">
    <text evidence="1">Nitrogen metabolism; (S)-allantoin degradation; allantoate from (S)-allantoin: step 1/1.</text>
</comment>
<comment type="subunit">
    <text evidence="1">Homotetramer.</text>
</comment>
<comment type="PTM">
    <text evidence="1">Carboxylation allows a single lysine to coordinate two zinc ions.</text>
</comment>
<comment type="similarity">
    <text evidence="1">Belongs to the metallo-dependent hydrolases superfamily. Allantoinase family.</text>
</comment>
<proteinExistence type="inferred from homology"/>
<reference key="1">
    <citation type="journal article" date="2008" name="J. Bacteriol.">
        <title>The pangenome structure of Escherichia coli: comparative genomic analysis of E. coli commensal and pathogenic isolates.</title>
        <authorList>
            <person name="Rasko D.A."/>
            <person name="Rosovitz M.J."/>
            <person name="Myers G.S.A."/>
            <person name="Mongodin E.F."/>
            <person name="Fricke W.F."/>
            <person name="Gajer P."/>
            <person name="Crabtree J."/>
            <person name="Sebaihia M."/>
            <person name="Thomson N.R."/>
            <person name="Chaudhuri R."/>
            <person name="Henderson I.R."/>
            <person name="Sperandio V."/>
            <person name="Ravel J."/>
        </authorList>
    </citation>
    <scope>NUCLEOTIDE SEQUENCE [LARGE SCALE GENOMIC DNA]</scope>
    <source>
        <strain>HS</strain>
    </source>
</reference>